<sequence length="832" mass="93154">MPLSYQHFRKLLLLDDEAGPLEEELPRLADEGLNHRVAEDLNLQLPNVSIPWTHKVGNFTGLYSSTLPIFNPNWQTPSFPDIHLHQDIINKCEQFVGPLTVNERRRLKLVMPARFYPTSTKYLPLEKGIKPYYPQDVVNHYFQTRHYLHTLWEAGILYKRETTRSASFCGSPYSWEQELQHGAESFNQQSTRIFSRAPVGPCIQSKHQQSRLGLQPQQGQLAKGQRGRSGSVRSRAHSATRRSVGVEPSGSGHNNNSASESASCLHQSAVRQEAYSHFSTSERHSSSGHALELHDISPSSARSQSKGSVFSCWWLQFRNSIPCSGHCLSHLVNLLEDWGPCTEHGKHHIRIPRTPARVTGGVFLVDKNPHNTAESRLVVDFSQFSRGSTRVPWPKFAVPNLQSLTNLLSSNLSWLSLDVSAAFYHLPLHPAAMPHLLVGSSGLSRYVARLSSNSRIHDHQHGTMQNLHNYCTRNLFVSLMLLYKTFGRKLHLYSHPIVLGFRKIPMGVGLSPFLLAQFTSAICSVVRRAFPHCLAFSYMDDVVLGAKSVQHLESLYTAVTNFLLSLGIHLNPTKTKRWGYSLNFMGYVIGSWGTLPQEHIVQKIKHCFRKIPVNRPIDWKVCQRIVGLLGFAAPFTQCGYPALMPLYACIQAKQAFTFSPIYKAFLSKQYATLYPVARQRAGLCQVFADATPTGWGLVIGQQRMRGTFVAPLPIHTAELLAACFARSRSGANIIGTDNSVVLSRKYTSFPWLLGCAANWILRGTSFVYVPSALNPADDPSRGRLGLSRPLCRLPFQPTTGRTSLYAVSPSVPSHLPDRVHFASPLHVAWRPP</sequence>
<dbReference type="EC" id="2.7.7.7" evidence="1"/>
<dbReference type="EC" id="2.7.7.49" evidence="1"/>
<dbReference type="EC" id="3.1.26.4" evidence="1"/>
<dbReference type="EMBL" id="AJ131567">
    <property type="protein sequence ID" value="CAA10422.1"/>
    <property type="molecule type" value="Genomic_DNA"/>
</dbReference>
<dbReference type="Proteomes" id="UP000007535">
    <property type="component" value="Segment"/>
</dbReference>
<dbReference type="GO" id="GO:0003677">
    <property type="term" value="F:DNA binding"/>
    <property type="evidence" value="ECO:0007669"/>
    <property type="project" value="UniProtKB-UniRule"/>
</dbReference>
<dbReference type="GO" id="GO:0003887">
    <property type="term" value="F:DNA-directed DNA polymerase activity"/>
    <property type="evidence" value="ECO:0007669"/>
    <property type="project" value="UniProtKB-UniRule"/>
</dbReference>
<dbReference type="GO" id="GO:0046872">
    <property type="term" value="F:metal ion binding"/>
    <property type="evidence" value="ECO:0007669"/>
    <property type="project" value="UniProtKB-UniRule"/>
</dbReference>
<dbReference type="GO" id="GO:0003964">
    <property type="term" value="F:RNA-directed DNA polymerase activity"/>
    <property type="evidence" value="ECO:0007669"/>
    <property type="project" value="UniProtKB-UniRule"/>
</dbReference>
<dbReference type="GO" id="GO:0004523">
    <property type="term" value="F:RNA-DNA hybrid ribonuclease activity"/>
    <property type="evidence" value="ECO:0007669"/>
    <property type="project" value="UniProtKB-UniRule"/>
</dbReference>
<dbReference type="GO" id="GO:0006260">
    <property type="term" value="P:DNA replication"/>
    <property type="evidence" value="ECO:0007669"/>
    <property type="project" value="UniProtKB-UniRule"/>
</dbReference>
<dbReference type="GO" id="GO:0052170">
    <property type="term" value="P:symbiont-mediated suppression of host innate immune response"/>
    <property type="evidence" value="ECO:0007669"/>
    <property type="project" value="UniProtKB-UniRule"/>
</dbReference>
<dbReference type="FunFam" id="3.30.70.270:FF:000009">
    <property type="entry name" value="Protein P"/>
    <property type="match status" value="1"/>
</dbReference>
<dbReference type="Gene3D" id="3.30.70.270">
    <property type="match status" value="1"/>
</dbReference>
<dbReference type="HAMAP" id="MF_04073">
    <property type="entry name" value="HBV_DPOL"/>
    <property type="match status" value="1"/>
</dbReference>
<dbReference type="InterPro" id="IPR043502">
    <property type="entry name" value="DNA/RNA_pol_sf"/>
</dbReference>
<dbReference type="InterPro" id="IPR001462">
    <property type="entry name" value="DNApol_viral_C"/>
</dbReference>
<dbReference type="InterPro" id="IPR000201">
    <property type="entry name" value="DNApol_viral_N"/>
</dbReference>
<dbReference type="InterPro" id="IPR037531">
    <property type="entry name" value="HBV_DPOL"/>
</dbReference>
<dbReference type="InterPro" id="IPR043128">
    <property type="entry name" value="Rev_trsase/Diguanyl_cyclase"/>
</dbReference>
<dbReference type="InterPro" id="IPR000477">
    <property type="entry name" value="RT_dom"/>
</dbReference>
<dbReference type="InterPro" id="IPR051320">
    <property type="entry name" value="Viral_Replic_Matur_Polypro"/>
</dbReference>
<dbReference type="PANTHER" id="PTHR33064">
    <property type="entry name" value="POL PROTEIN"/>
    <property type="match status" value="1"/>
</dbReference>
<dbReference type="PANTHER" id="PTHR33064:SF37">
    <property type="entry name" value="RIBONUCLEASE H"/>
    <property type="match status" value="1"/>
</dbReference>
<dbReference type="Pfam" id="PF00336">
    <property type="entry name" value="DNA_pol_viral_C"/>
    <property type="match status" value="1"/>
</dbReference>
<dbReference type="Pfam" id="PF00242">
    <property type="entry name" value="DNA_pol_viral_N"/>
    <property type="match status" value="1"/>
</dbReference>
<dbReference type="Pfam" id="PF00078">
    <property type="entry name" value="RVT_1"/>
    <property type="match status" value="1"/>
</dbReference>
<dbReference type="SUPFAM" id="SSF56672">
    <property type="entry name" value="DNA/RNA polymerases"/>
    <property type="match status" value="1"/>
</dbReference>
<dbReference type="PROSITE" id="PS50878">
    <property type="entry name" value="RT_POL"/>
    <property type="match status" value="1"/>
</dbReference>
<name>DPOL_HBVGO</name>
<reference key="1">
    <citation type="journal article" date="2000" name="J. Virol.">
        <title>Molecular epidemiology of hepatitis B virus variants in nonhuman primates.</title>
        <authorList>
            <person name="Grethe S."/>
            <person name="Heckel J.O."/>
            <person name="Rietschel W."/>
            <person name="Hufert F.T."/>
        </authorList>
    </citation>
    <scope>NUCLEOTIDE SEQUENCE [GENOMIC DNA]</scope>
</reference>
<reference key="2">
    <citation type="journal article" date="2007" name="World J. Gastroenterol.">
        <title>Hepatitis B virus replication.</title>
        <authorList>
            <person name="Beck J."/>
            <person name="Nassal M."/>
        </authorList>
    </citation>
    <scope>REVIEW</scope>
</reference>
<accession>Q9YPV8</accession>
<organismHost>
    <name type="scientific">Gorilla gorilla</name>
    <name type="common">western gorilla</name>
    <dbReference type="NCBI Taxonomy" id="9593"/>
</organismHost>
<organism>
    <name type="scientific">Gorilla hepatitis B virus (isolate Cameroon/gor97)</name>
    <name type="common">HBVgor</name>
    <dbReference type="NCBI Taxonomy" id="489546"/>
    <lineage>
        <taxon>Viruses</taxon>
        <taxon>Riboviria</taxon>
        <taxon>Pararnavirae</taxon>
        <taxon>Artverviricota</taxon>
        <taxon>Revtraviricetes</taxon>
        <taxon>Blubervirales</taxon>
        <taxon>Hepadnaviridae</taxon>
        <taxon>Orthohepadnavirus</taxon>
        <taxon>Hepatitis B virus</taxon>
    </lineage>
</organism>
<gene>
    <name evidence="1" type="primary">P</name>
</gene>
<proteinExistence type="inferred from homology"/>
<protein>
    <recommendedName>
        <fullName evidence="1">Protein P</fullName>
    </recommendedName>
    <domain>
        <recommendedName>
            <fullName evidence="1">DNA-directed DNA polymerase</fullName>
            <ecNumber evidence="1">2.7.7.7</ecNumber>
        </recommendedName>
    </domain>
    <domain>
        <recommendedName>
            <fullName evidence="1">RNA-directed DNA polymerase</fullName>
            <ecNumber evidence="1">2.7.7.49</ecNumber>
        </recommendedName>
    </domain>
    <domain>
        <recommendedName>
            <fullName evidence="1">Ribonuclease H</fullName>
            <ecNumber evidence="1">3.1.26.4</ecNumber>
        </recommendedName>
    </domain>
</protein>
<comment type="function">
    <text evidence="1">Multifunctional enzyme that converts the viral RNA genome into dsDNA in viral cytoplasmic capsids. This enzyme displays a DNA polymerase activity that can copy either DNA or RNA templates, and a ribonuclease H (RNase H) activity that cleaves the RNA strand of RNA-DNA heteroduplexes in a partially processive 3'- to 5'-endonucleasic mode. Neo-synthesized pregenomic RNA (pgRNA) are encapsidated together with the P protein, and reverse-transcribed inside the nucleocapsid. Initiation of reverse-transcription occurs first by binding the epsilon loop on the pgRNA genome, and is initiated by protein priming, thereby the 5'-end of (-)DNA is covalently linked to P protein. Partial (+)DNA is synthesized from the (-)DNA template and generates the relaxed circular DNA (RC-DNA) genome. After budding and infection, the RC-DNA migrates in the nucleus, and is converted into a plasmid-like covalently closed circular DNA (cccDNA). The activity of P protein does not seem to be necessary for cccDNA generation, and is presumably released from (+)DNA by host nuclear DNA repair machinery.</text>
</comment>
<comment type="catalytic activity">
    <reaction evidence="1">
        <text>DNA(n) + a 2'-deoxyribonucleoside 5'-triphosphate = DNA(n+1) + diphosphate</text>
        <dbReference type="Rhea" id="RHEA:22508"/>
        <dbReference type="Rhea" id="RHEA-COMP:17339"/>
        <dbReference type="Rhea" id="RHEA-COMP:17340"/>
        <dbReference type="ChEBI" id="CHEBI:33019"/>
        <dbReference type="ChEBI" id="CHEBI:61560"/>
        <dbReference type="ChEBI" id="CHEBI:173112"/>
        <dbReference type="EC" id="2.7.7.7"/>
    </reaction>
</comment>
<comment type="catalytic activity">
    <reaction evidence="1">
        <text>DNA(n) + a 2'-deoxyribonucleoside 5'-triphosphate = DNA(n+1) + diphosphate</text>
        <dbReference type="Rhea" id="RHEA:22508"/>
        <dbReference type="Rhea" id="RHEA-COMP:17339"/>
        <dbReference type="Rhea" id="RHEA-COMP:17340"/>
        <dbReference type="ChEBI" id="CHEBI:33019"/>
        <dbReference type="ChEBI" id="CHEBI:61560"/>
        <dbReference type="ChEBI" id="CHEBI:173112"/>
        <dbReference type="EC" id="2.7.7.49"/>
    </reaction>
</comment>
<comment type="catalytic activity">
    <reaction evidence="1">
        <text>Endonucleolytic cleavage to 5'-phosphomonoester.</text>
        <dbReference type="EC" id="3.1.26.4"/>
    </reaction>
</comment>
<comment type="activity regulation">
    <text evidence="1">Activated by host HSP70 and HSP40 in vitro to be able to bind the epsilon loop of the pgRNA. Because deletion of the RNase H region renders the protein partly chaperone-independent, the chaperones may be needed indirectly to relieve occlusion of the RNA-binding site by this domain. Inhibited by several reverse-transcriptase inhibitors: Lamivudine, Adefovir and Entecavir.</text>
</comment>
<comment type="domain">
    <text evidence="1">Terminal protein domain (TP) is hepadnavirus-specific. Spacer domain is highly variable and separates the TP and RT domains. Polymerase/reverse-transcriptase domain (RT) and ribonuclease H domain (RH) are similar to retrovirus reverse transcriptase/RNase H.</text>
</comment>
<comment type="domain">
    <text evidence="1">The polymerase/reverse transcriptase (RT) and ribonuclease H (RH) domains are structured in five subdomains: finger, palm, thumb, connection and RNase H. Within the palm subdomain, the 'primer grip' region is thought to be involved in the positioning of the primer terminus for accommodating the incoming nucleotide. The RH domain stabilizes the association of RT with primer-template.</text>
</comment>
<comment type="miscellaneous">
    <text evidence="1">Hepadnaviral virions contain probably just one P protein molecule per particle.</text>
</comment>
<comment type="similarity">
    <text evidence="1">Belongs to the hepadnaviridae P protein family.</text>
</comment>
<evidence type="ECO:0000255" key="1">
    <source>
        <dbReference type="HAMAP-Rule" id="MF_04073"/>
    </source>
</evidence>
<evidence type="ECO:0000256" key="2">
    <source>
        <dbReference type="SAM" id="MobiDB-lite"/>
    </source>
</evidence>
<keyword id="KW-0235">DNA replication</keyword>
<keyword id="KW-0238">DNA-binding</keyword>
<keyword id="KW-0239">DNA-directed DNA polymerase</keyword>
<keyword id="KW-0255">Endonuclease</keyword>
<keyword id="KW-0945">Host-virus interaction</keyword>
<keyword id="KW-0378">Hydrolase</keyword>
<keyword id="KW-1090">Inhibition of host innate immune response by virus</keyword>
<keyword id="KW-1113">Inhibition of host RLR pathway by virus</keyword>
<keyword id="KW-0460">Magnesium</keyword>
<keyword id="KW-0479">Metal-binding</keyword>
<keyword id="KW-0511">Multifunctional enzyme</keyword>
<keyword id="KW-0540">Nuclease</keyword>
<keyword id="KW-0548">Nucleotidyltransferase</keyword>
<keyword id="KW-0695">RNA-directed DNA polymerase</keyword>
<keyword id="KW-0808">Transferase</keyword>
<keyword id="KW-0899">Viral immunoevasion</keyword>
<feature type="chain" id="PRO_0000323284" description="Protein P">
    <location>
        <begin position="1"/>
        <end position="832"/>
    </location>
</feature>
<feature type="domain" description="Reverse transcriptase" evidence="1">
    <location>
        <begin position="346"/>
        <end position="589"/>
    </location>
</feature>
<feature type="region of interest" description="Terminal protein domain (TP)" evidence="1">
    <location>
        <begin position="1"/>
        <end position="177"/>
    </location>
</feature>
<feature type="region of interest" description="Spacer" evidence="1">
    <location>
        <begin position="178"/>
        <end position="335"/>
    </location>
</feature>
<feature type="region of interest" description="Disordered" evidence="2">
    <location>
        <begin position="205"/>
        <end position="263"/>
    </location>
</feature>
<feature type="region of interest" description="Polymerase/reverse transcriptase domain (RT)" evidence="1">
    <location>
        <begin position="336"/>
        <end position="679"/>
    </location>
</feature>
<feature type="compositionally biased region" description="Polar residues" evidence="2">
    <location>
        <begin position="205"/>
        <end position="220"/>
    </location>
</feature>
<feature type="compositionally biased region" description="Polar residues" evidence="2">
    <location>
        <begin position="251"/>
        <end position="263"/>
    </location>
</feature>
<feature type="binding site" evidence="1">
    <location>
        <position position="418"/>
    </location>
    <ligand>
        <name>Mg(2+)</name>
        <dbReference type="ChEBI" id="CHEBI:18420"/>
        <note>catalytic</note>
    </ligand>
</feature>
<feature type="binding site" evidence="1">
    <location>
        <position position="540"/>
    </location>
    <ligand>
        <name>Mg(2+)</name>
        <dbReference type="ChEBI" id="CHEBI:18420"/>
        <note>catalytic</note>
    </ligand>
</feature>
<feature type="binding site" evidence="1">
    <location>
        <position position="541"/>
    </location>
    <ligand>
        <name>Mg(2+)</name>
        <dbReference type="ChEBI" id="CHEBI:18420"/>
        <note>catalytic</note>
    </ligand>
</feature>
<feature type="site" description="Priming of reverse-transcription by covalently linking the first nucleotide of the (-)DNA" evidence="1">
    <location>
        <position position="63"/>
    </location>
</feature>